<keyword id="KW-0378">Hydrolase</keyword>
<keyword id="KW-0479">Metal-binding</keyword>
<keyword id="KW-0482">Metalloprotease</keyword>
<keyword id="KW-0645">Protease</keyword>
<keyword id="KW-1185">Reference proteome</keyword>
<keyword id="KW-0862">Zinc</keyword>
<dbReference type="EC" id="3.4.24.-"/>
<dbReference type="EMBL" id="U34795">
    <property type="protein sequence ID" value="AAC43684.1"/>
    <property type="molecule type" value="Genomic_DNA"/>
</dbReference>
<dbReference type="EMBL" id="U00089">
    <property type="protein sequence ID" value="AAB96282.1"/>
    <property type="molecule type" value="Genomic_DNA"/>
</dbReference>
<dbReference type="PIR" id="S62811">
    <property type="entry name" value="S62811"/>
</dbReference>
<dbReference type="RefSeq" id="NP_109885.1">
    <property type="nucleotide sequence ID" value="NC_000912.1"/>
</dbReference>
<dbReference type="RefSeq" id="WP_010874554.1">
    <property type="nucleotide sequence ID" value="NZ_OU342337.1"/>
</dbReference>
<dbReference type="SMR" id="P54125"/>
<dbReference type="STRING" id="272634.MPN_197"/>
<dbReference type="EnsemblBacteria" id="AAB96282">
    <property type="protein sequence ID" value="AAB96282"/>
    <property type="gene ID" value="MPN_197"/>
</dbReference>
<dbReference type="KEGG" id="mpn:MPN_197"/>
<dbReference type="PATRIC" id="fig|272634.6.peg.215"/>
<dbReference type="HOGENOM" id="CLU_021290_2_0_14"/>
<dbReference type="OrthoDB" id="9766487at2"/>
<dbReference type="BioCyc" id="MPNE272634:G1GJ3-315-MONOMER"/>
<dbReference type="Proteomes" id="UP000000808">
    <property type="component" value="Chromosome"/>
</dbReference>
<dbReference type="GO" id="GO:0046872">
    <property type="term" value="F:metal ion binding"/>
    <property type="evidence" value="ECO:0007669"/>
    <property type="project" value="UniProtKB-KW"/>
</dbReference>
<dbReference type="GO" id="GO:0004222">
    <property type="term" value="F:metalloendopeptidase activity"/>
    <property type="evidence" value="ECO:0007669"/>
    <property type="project" value="InterPro"/>
</dbReference>
<dbReference type="GO" id="GO:0006508">
    <property type="term" value="P:proteolysis"/>
    <property type="evidence" value="ECO:0007669"/>
    <property type="project" value="UniProtKB-KW"/>
</dbReference>
<dbReference type="CDD" id="cd09608">
    <property type="entry name" value="M3B_PepF"/>
    <property type="match status" value="1"/>
</dbReference>
<dbReference type="Gene3D" id="1.10.1370.20">
    <property type="entry name" value="Oligoendopeptidase f, C-terminal domain"/>
    <property type="match status" value="1"/>
</dbReference>
<dbReference type="Gene3D" id="1.20.140.70">
    <property type="entry name" value="Oligopeptidase f, N-terminal domain"/>
    <property type="match status" value="1"/>
</dbReference>
<dbReference type="InterPro" id="IPR013647">
    <property type="entry name" value="OligopepF_N_dom"/>
</dbReference>
<dbReference type="InterPro" id="IPR042088">
    <property type="entry name" value="OligoPept_F_C"/>
</dbReference>
<dbReference type="InterPro" id="IPR001567">
    <property type="entry name" value="Pept_M3A_M3B_dom"/>
</dbReference>
<dbReference type="InterPro" id="IPR004438">
    <property type="entry name" value="Peptidase_M3B"/>
</dbReference>
<dbReference type="NCBIfam" id="TIGR00181">
    <property type="entry name" value="pepF"/>
    <property type="match status" value="1"/>
</dbReference>
<dbReference type="Pfam" id="PF01432">
    <property type="entry name" value="Peptidase_M3"/>
    <property type="match status" value="1"/>
</dbReference>
<dbReference type="Pfam" id="PF08439">
    <property type="entry name" value="Peptidase_M3_N"/>
    <property type="match status" value="1"/>
</dbReference>
<dbReference type="SUPFAM" id="SSF55486">
    <property type="entry name" value="Metalloproteases ('zincins'), catalytic domain"/>
    <property type="match status" value="1"/>
</dbReference>
<dbReference type="PROSITE" id="PS00142">
    <property type="entry name" value="ZINC_PROTEASE"/>
    <property type="match status" value="1"/>
</dbReference>
<name>PEPF_MYCPN</name>
<protein>
    <recommendedName>
        <fullName>Oligoendopeptidase F homolog</fullName>
        <ecNumber>3.4.24.-</ecNumber>
    </recommendedName>
</protein>
<sequence>MNNQYNWNLEVLLNGKSLADNFTELKQLSEQEKALYDGGACFQTKAKFTEFLQLQEKIEVLENRYSNFLSNKHAENSLDKTINDALFQYEMFKSEHALVFVDFEKNLFKHEKVIRAYLQDPALKQYQRDFELVWRNKKHQIDPASQKLLAQISPAWNQADKIFNVLSTADLNLQPVVYKGKTYVINAVSDYQSLLENKDRGLREAAYKVWLEIYWPTRNTLSVSLVENYIQLETFAKLKKHPNYIAKTAFDDEIDVAFIDFVYEQVASFAPTFKAFQSLRKQIYKHVLKLDKAQPWDLSVPLFKASGDYTIEQAQTDALKILAPMGSEYLEVVKEAFRERWISWLPDKNKYTGAYSISNVKGLDHYFILMNFDKTRASLNTLVHELGHSVHSWYASKYQTQNLDPTIFYAEIASICNELLLCYHDIINYENRNPQQLIRSLMEQISHFFGATTRQLMFSQFEQDTLKLIQQNQKPDFKTLVEIYGKTAIKYQAANADAITKKLKQTKYQKSLAYITSIPHFYAGNFYVYKYAIGQVVGTLVGKKLSAGDSNMLAAYKRFLSSGSTLPPLETIKLLGIDLTQPEPWQEAHAELKRWIKLVQTAFKQLQHKKR</sequence>
<comment type="cofactor">
    <cofactor evidence="1">
        <name>Zn(2+)</name>
        <dbReference type="ChEBI" id="CHEBI:29105"/>
    </cofactor>
    <text evidence="1">Binds 1 zinc ion.</text>
</comment>
<comment type="similarity">
    <text evidence="3">Belongs to the peptidase M3B family.</text>
</comment>
<organism>
    <name type="scientific">Mycoplasma pneumoniae (strain ATCC 29342 / M129 / Subtype 1)</name>
    <name type="common">Mycoplasmoides pneumoniae</name>
    <dbReference type="NCBI Taxonomy" id="272634"/>
    <lineage>
        <taxon>Bacteria</taxon>
        <taxon>Bacillati</taxon>
        <taxon>Mycoplasmatota</taxon>
        <taxon>Mycoplasmoidales</taxon>
        <taxon>Mycoplasmoidaceae</taxon>
        <taxon>Mycoplasmoides</taxon>
    </lineage>
</organism>
<proteinExistence type="inferred from homology"/>
<evidence type="ECO:0000250" key="1"/>
<evidence type="ECO:0000255" key="2">
    <source>
        <dbReference type="PROSITE-ProRule" id="PRU10095"/>
    </source>
</evidence>
<evidence type="ECO:0000305" key="3"/>
<gene>
    <name type="primary">pepF</name>
    <name type="ordered locus">MPN_197</name>
    <name type="ORF">MP634</name>
</gene>
<accession>P54125</accession>
<feature type="chain" id="PRO_0000078168" description="Oligoendopeptidase F homolog">
    <location>
        <begin position="1"/>
        <end position="611"/>
    </location>
</feature>
<feature type="active site" evidence="2">
    <location>
        <position position="385"/>
    </location>
</feature>
<feature type="binding site" evidence="2">
    <location>
        <position position="384"/>
    </location>
    <ligand>
        <name>Zn(2+)</name>
        <dbReference type="ChEBI" id="CHEBI:29105"/>
        <note>catalytic</note>
    </ligand>
</feature>
<feature type="binding site" evidence="2">
    <location>
        <position position="388"/>
    </location>
    <ligand>
        <name>Zn(2+)</name>
        <dbReference type="ChEBI" id="CHEBI:29105"/>
        <note>catalytic</note>
    </ligand>
</feature>
<feature type="binding site" evidence="2">
    <location>
        <position position="391"/>
    </location>
    <ligand>
        <name>Zn(2+)</name>
        <dbReference type="ChEBI" id="CHEBI:29105"/>
        <note>catalytic</note>
    </ligand>
</feature>
<reference key="1">
    <citation type="journal article" date="1996" name="Nucleic Acids Res.">
        <title>Sequence analysis of 56 kb from the genome of the bacterium Mycoplasma pneumoniae comprising the dnaA region, the atp operon and a cluster of ribosomal protein genes.</title>
        <authorList>
            <person name="Hilbert H."/>
            <person name="Himmelreich R."/>
            <person name="Plagens H."/>
            <person name="Herrmann R."/>
        </authorList>
    </citation>
    <scope>NUCLEOTIDE SEQUENCE [GENOMIC DNA]</scope>
    <source>
        <strain>ATCC 29342 / M129 / Subtype 1</strain>
    </source>
</reference>
<reference key="2">
    <citation type="journal article" date="1996" name="Nucleic Acids Res.">
        <title>Complete sequence analysis of the genome of the bacterium Mycoplasma pneumoniae.</title>
        <authorList>
            <person name="Himmelreich R."/>
            <person name="Hilbert H."/>
            <person name="Plagens H."/>
            <person name="Pirkl E."/>
            <person name="Li B.-C."/>
            <person name="Herrmann R."/>
        </authorList>
    </citation>
    <scope>NUCLEOTIDE SEQUENCE [LARGE SCALE GENOMIC DNA]</scope>
    <source>
        <strain>ATCC 29342 / M129 / Subtype 1</strain>
    </source>
</reference>